<reference key="1">
    <citation type="journal article" date="2008" name="Science">
        <title>Genome of an endosymbiont coupling N2 fixation to cellulolysis within RT protist cells in termite gut.</title>
        <authorList>
            <person name="Hongoh Y."/>
            <person name="Sharma V.K."/>
            <person name="Prakash T."/>
            <person name="Noda S."/>
            <person name="Toh H."/>
            <person name="Taylor T.D."/>
            <person name="Kudo T."/>
            <person name="Sakaki Y."/>
            <person name="Toyoda A."/>
            <person name="Hattori M."/>
            <person name="Ohkuma M."/>
        </authorList>
    </citation>
    <scope>NUCLEOTIDE SEQUENCE [LARGE SCALE GENOMIC DNA]</scope>
</reference>
<accession>B6YRC6</accession>
<evidence type="ECO:0000255" key="1">
    <source>
        <dbReference type="HAMAP-Rule" id="MF_00001"/>
    </source>
</evidence>
<dbReference type="EC" id="2.1.3.2" evidence="1"/>
<dbReference type="EMBL" id="AP010656">
    <property type="protein sequence ID" value="BAG83748.1"/>
    <property type="molecule type" value="Genomic_DNA"/>
</dbReference>
<dbReference type="RefSeq" id="WP_012573509.1">
    <property type="nucleotide sequence ID" value="NC_011565.1"/>
</dbReference>
<dbReference type="SMR" id="B6YRC6"/>
<dbReference type="STRING" id="511995.CFPG_485"/>
<dbReference type="KEGG" id="aps:CFPG_485"/>
<dbReference type="eggNOG" id="COG0540">
    <property type="taxonomic scope" value="Bacteria"/>
</dbReference>
<dbReference type="HOGENOM" id="CLU_043846_1_2_10"/>
<dbReference type="OrthoDB" id="9774690at2"/>
<dbReference type="UniPathway" id="UPA00070">
    <property type="reaction ID" value="UER00116"/>
</dbReference>
<dbReference type="Proteomes" id="UP000000723">
    <property type="component" value="Chromosome"/>
</dbReference>
<dbReference type="GO" id="GO:0005829">
    <property type="term" value="C:cytosol"/>
    <property type="evidence" value="ECO:0007669"/>
    <property type="project" value="TreeGrafter"/>
</dbReference>
<dbReference type="GO" id="GO:0016597">
    <property type="term" value="F:amino acid binding"/>
    <property type="evidence" value="ECO:0007669"/>
    <property type="project" value="InterPro"/>
</dbReference>
<dbReference type="GO" id="GO:0004070">
    <property type="term" value="F:aspartate carbamoyltransferase activity"/>
    <property type="evidence" value="ECO:0007669"/>
    <property type="project" value="UniProtKB-UniRule"/>
</dbReference>
<dbReference type="GO" id="GO:0006207">
    <property type="term" value="P:'de novo' pyrimidine nucleobase biosynthetic process"/>
    <property type="evidence" value="ECO:0007669"/>
    <property type="project" value="InterPro"/>
</dbReference>
<dbReference type="GO" id="GO:0044205">
    <property type="term" value="P:'de novo' UMP biosynthetic process"/>
    <property type="evidence" value="ECO:0007669"/>
    <property type="project" value="UniProtKB-UniRule"/>
</dbReference>
<dbReference type="GO" id="GO:0006520">
    <property type="term" value="P:amino acid metabolic process"/>
    <property type="evidence" value="ECO:0007669"/>
    <property type="project" value="InterPro"/>
</dbReference>
<dbReference type="FunFam" id="3.40.50.1370:FF:000001">
    <property type="entry name" value="Aspartate carbamoyltransferase"/>
    <property type="match status" value="1"/>
</dbReference>
<dbReference type="FunFam" id="3.40.50.1370:FF:000002">
    <property type="entry name" value="Aspartate carbamoyltransferase 2"/>
    <property type="match status" value="1"/>
</dbReference>
<dbReference type="Gene3D" id="3.40.50.1370">
    <property type="entry name" value="Aspartate/ornithine carbamoyltransferase"/>
    <property type="match status" value="2"/>
</dbReference>
<dbReference type="HAMAP" id="MF_00001">
    <property type="entry name" value="Asp_carb_tr"/>
    <property type="match status" value="1"/>
</dbReference>
<dbReference type="InterPro" id="IPR006132">
    <property type="entry name" value="Asp/Orn_carbamoyltranf_P-bd"/>
</dbReference>
<dbReference type="InterPro" id="IPR006130">
    <property type="entry name" value="Asp/Orn_carbamoylTrfase"/>
</dbReference>
<dbReference type="InterPro" id="IPR036901">
    <property type="entry name" value="Asp/Orn_carbamoylTrfase_sf"/>
</dbReference>
<dbReference type="InterPro" id="IPR002082">
    <property type="entry name" value="Asp_carbamoyltransf"/>
</dbReference>
<dbReference type="InterPro" id="IPR006131">
    <property type="entry name" value="Asp_carbamoyltransf_Asp/Orn-bd"/>
</dbReference>
<dbReference type="NCBIfam" id="TIGR00670">
    <property type="entry name" value="asp_carb_tr"/>
    <property type="match status" value="1"/>
</dbReference>
<dbReference type="NCBIfam" id="NF002032">
    <property type="entry name" value="PRK00856.1"/>
    <property type="match status" value="1"/>
</dbReference>
<dbReference type="PANTHER" id="PTHR45753:SF6">
    <property type="entry name" value="ASPARTATE CARBAMOYLTRANSFERASE"/>
    <property type="match status" value="1"/>
</dbReference>
<dbReference type="PANTHER" id="PTHR45753">
    <property type="entry name" value="ORNITHINE CARBAMOYLTRANSFERASE, MITOCHONDRIAL"/>
    <property type="match status" value="1"/>
</dbReference>
<dbReference type="Pfam" id="PF00185">
    <property type="entry name" value="OTCace"/>
    <property type="match status" value="1"/>
</dbReference>
<dbReference type="Pfam" id="PF02729">
    <property type="entry name" value="OTCace_N"/>
    <property type="match status" value="1"/>
</dbReference>
<dbReference type="PRINTS" id="PR00100">
    <property type="entry name" value="AOTCASE"/>
</dbReference>
<dbReference type="PRINTS" id="PR00101">
    <property type="entry name" value="ATCASE"/>
</dbReference>
<dbReference type="SUPFAM" id="SSF53671">
    <property type="entry name" value="Aspartate/ornithine carbamoyltransferase"/>
    <property type="match status" value="1"/>
</dbReference>
<dbReference type="PROSITE" id="PS00097">
    <property type="entry name" value="CARBAMOYLTRANSFERASE"/>
    <property type="match status" value="1"/>
</dbReference>
<name>PYRB_AZOPC</name>
<feature type="chain" id="PRO_1000088736" description="Aspartate carbamoyltransferase catalytic subunit">
    <location>
        <begin position="1"/>
        <end position="302"/>
    </location>
</feature>
<feature type="binding site" evidence="1">
    <location>
        <position position="51"/>
    </location>
    <ligand>
        <name>carbamoyl phosphate</name>
        <dbReference type="ChEBI" id="CHEBI:58228"/>
    </ligand>
</feature>
<feature type="binding site" evidence="1">
    <location>
        <position position="52"/>
    </location>
    <ligand>
        <name>carbamoyl phosphate</name>
        <dbReference type="ChEBI" id="CHEBI:58228"/>
    </ligand>
</feature>
<feature type="binding site" evidence="1">
    <location>
        <position position="80"/>
    </location>
    <ligand>
        <name>L-aspartate</name>
        <dbReference type="ChEBI" id="CHEBI:29991"/>
    </ligand>
</feature>
<feature type="binding site" evidence="1">
    <location>
        <position position="101"/>
    </location>
    <ligand>
        <name>carbamoyl phosphate</name>
        <dbReference type="ChEBI" id="CHEBI:58228"/>
    </ligand>
</feature>
<feature type="binding site" evidence="1">
    <location>
        <position position="129"/>
    </location>
    <ligand>
        <name>carbamoyl phosphate</name>
        <dbReference type="ChEBI" id="CHEBI:58228"/>
    </ligand>
</feature>
<feature type="binding site" evidence="1">
    <location>
        <position position="132"/>
    </location>
    <ligand>
        <name>carbamoyl phosphate</name>
        <dbReference type="ChEBI" id="CHEBI:58228"/>
    </ligand>
</feature>
<feature type="binding site" evidence="1">
    <location>
        <position position="162"/>
    </location>
    <ligand>
        <name>L-aspartate</name>
        <dbReference type="ChEBI" id="CHEBI:29991"/>
    </ligand>
</feature>
<feature type="binding site" evidence="1">
    <location>
        <position position="224"/>
    </location>
    <ligand>
        <name>L-aspartate</name>
        <dbReference type="ChEBI" id="CHEBI:29991"/>
    </ligand>
</feature>
<feature type="binding site" evidence="1">
    <location>
        <position position="263"/>
    </location>
    <ligand>
        <name>carbamoyl phosphate</name>
        <dbReference type="ChEBI" id="CHEBI:58228"/>
    </ligand>
</feature>
<feature type="binding site" evidence="1">
    <location>
        <position position="264"/>
    </location>
    <ligand>
        <name>carbamoyl phosphate</name>
        <dbReference type="ChEBI" id="CHEBI:58228"/>
    </ligand>
</feature>
<protein>
    <recommendedName>
        <fullName evidence="1">Aspartate carbamoyltransferase catalytic subunit</fullName>
        <ecNumber evidence="1">2.1.3.2</ecNumber>
    </recommendedName>
    <alternativeName>
        <fullName evidence="1">Aspartate transcarbamylase</fullName>
        <shortName evidence="1">ATCase</shortName>
    </alternativeName>
</protein>
<organism>
    <name type="scientific">Azobacteroides pseudotrichonymphae genomovar. CFP2</name>
    <dbReference type="NCBI Taxonomy" id="511995"/>
    <lineage>
        <taxon>Bacteria</taxon>
        <taxon>Pseudomonadati</taxon>
        <taxon>Bacteroidota</taxon>
        <taxon>Bacteroidia</taxon>
        <taxon>Bacteroidales</taxon>
        <taxon>Candidatus Azobacteroides</taxon>
    </lineage>
</organism>
<proteinExistence type="inferred from homology"/>
<gene>
    <name evidence="1" type="primary">pyrB</name>
    <name type="ordered locus">CFPG_485</name>
</gene>
<sequence length="302" mass="34681">MKKKDFVSITDCSKQDILHLIERSAYFERNLNQLLLKDKICATLFFEPSTRTRLSFETAINRLNGRIIGFSDVHTTSSSKGETLKDTIKIVSNYADVIIMRHYLEGAARYASKITDVPIVNAGDGANQHPSQTLLDIYSMYKTQGTLYNLTITIVGDLKYGRTVHSLLNGMSYFNPTFHFIAPEELKLPIIYKQFMDENSIQYFDHSDFLVDIINQSDILYMTRVQRERFNDLIEYEKVKNVYVLSNDMLADSKDNLRILHPLPRVGEITSDVDTNPKAYYFEQARNGIFARQAIICDVLGL</sequence>
<keyword id="KW-0665">Pyrimidine biosynthesis</keyword>
<keyword id="KW-1185">Reference proteome</keyword>
<keyword id="KW-0808">Transferase</keyword>
<comment type="function">
    <text evidence="1">Catalyzes the condensation of carbamoyl phosphate and aspartate to form carbamoyl aspartate and inorganic phosphate, the committed step in the de novo pyrimidine nucleotide biosynthesis pathway.</text>
</comment>
<comment type="catalytic activity">
    <reaction evidence="1">
        <text>carbamoyl phosphate + L-aspartate = N-carbamoyl-L-aspartate + phosphate + H(+)</text>
        <dbReference type="Rhea" id="RHEA:20013"/>
        <dbReference type="ChEBI" id="CHEBI:15378"/>
        <dbReference type="ChEBI" id="CHEBI:29991"/>
        <dbReference type="ChEBI" id="CHEBI:32814"/>
        <dbReference type="ChEBI" id="CHEBI:43474"/>
        <dbReference type="ChEBI" id="CHEBI:58228"/>
        <dbReference type="EC" id="2.1.3.2"/>
    </reaction>
</comment>
<comment type="pathway">
    <text evidence="1">Pyrimidine metabolism; UMP biosynthesis via de novo pathway; (S)-dihydroorotate from bicarbonate: step 2/3.</text>
</comment>
<comment type="subunit">
    <text evidence="1">Heterododecamer (2C3:3R2) of six catalytic PyrB chains organized as two trimers (C3), and six regulatory PyrI chains organized as three dimers (R2).</text>
</comment>
<comment type="similarity">
    <text evidence="1">Belongs to the aspartate/ornithine carbamoyltransferase superfamily. ATCase family.</text>
</comment>